<keyword id="KW-0963">Cytoplasm</keyword>
<keyword id="KW-0396">Initiation factor</keyword>
<keyword id="KW-0597">Phosphoprotein</keyword>
<keyword id="KW-0648">Protein biosynthesis</keyword>
<keyword id="KW-0652">Protein synthesis inhibitor</keyword>
<keyword id="KW-1185">Reference proteome</keyword>
<keyword id="KW-0810">Translation regulation</keyword>
<comment type="function">
    <text evidence="1">Acts as an inhibitor of cap-dependent translation. Competes with eIF4G1 and EAP1 for binding to eIF4E and interferes with the formation of the eIF4F complex, inhibiting translation and stabilizing mRNA (By similarity).</text>
</comment>
<comment type="subcellular location">
    <subcellularLocation>
        <location evidence="1">Cytoplasm</location>
    </subcellularLocation>
</comment>
<comment type="similarity">
    <text evidence="3">Belongs to the CAF20 family.</text>
</comment>
<gene>
    <name type="primary">CAF20</name>
    <name type="ORF">LELG_00679</name>
</gene>
<dbReference type="EMBL" id="CH981524">
    <property type="protein sequence ID" value="EDK42501.1"/>
    <property type="molecule type" value="Genomic_DNA"/>
</dbReference>
<dbReference type="RefSeq" id="XP_001528159.1">
    <property type="nucleotide sequence ID" value="XM_001528109.1"/>
</dbReference>
<dbReference type="SMR" id="A5DTJ3"/>
<dbReference type="FunCoup" id="A5DTJ3">
    <property type="interactions" value="346"/>
</dbReference>
<dbReference type="STRING" id="379508.A5DTJ3"/>
<dbReference type="GeneID" id="5235854"/>
<dbReference type="KEGG" id="lel:PVL30_000654"/>
<dbReference type="eggNOG" id="ENOG502S2E7">
    <property type="taxonomic scope" value="Eukaryota"/>
</dbReference>
<dbReference type="HOGENOM" id="CLU_128343_0_0_1"/>
<dbReference type="InParanoid" id="A5DTJ3"/>
<dbReference type="OMA" id="NGNERPY"/>
<dbReference type="OrthoDB" id="3995390at2759"/>
<dbReference type="Proteomes" id="UP000001996">
    <property type="component" value="Unassembled WGS sequence"/>
</dbReference>
<dbReference type="GO" id="GO:0005737">
    <property type="term" value="C:cytoplasm"/>
    <property type="evidence" value="ECO:0007669"/>
    <property type="project" value="UniProtKB-SubCell"/>
</dbReference>
<dbReference type="GO" id="GO:0008190">
    <property type="term" value="F:eukaryotic initiation factor 4E binding"/>
    <property type="evidence" value="ECO:0007669"/>
    <property type="project" value="InterPro"/>
</dbReference>
<dbReference type="GO" id="GO:0003743">
    <property type="term" value="F:translation initiation factor activity"/>
    <property type="evidence" value="ECO:0007669"/>
    <property type="project" value="UniProtKB-KW"/>
</dbReference>
<dbReference type="GO" id="GO:0017148">
    <property type="term" value="P:negative regulation of translation"/>
    <property type="evidence" value="ECO:0007669"/>
    <property type="project" value="UniProtKB-KW"/>
</dbReference>
<dbReference type="InterPro" id="IPR031456">
    <property type="entry name" value="Caf20"/>
</dbReference>
<dbReference type="Pfam" id="PF17052">
    <property type="entry name" value="CAF20"/>
    <property type="match status" value="1"/>
</dbReference>
<sequence>MAKYTEEQLFAIKEETSYVPQPQILSAFNELIEQVKEHAHQQQLQYQQQQQQQQGFSGIGSGVSGPGAQKWRNGDTYIDEHGHERSYHHMNRRRPSRSNNGEKKPFFNKKKTEVVVDEDGWETFTPVQHAHRGSIGEDGSEEKSKFRDSVSGSSGSGAGAGAGAGAASGSAGGVRARPNNKNLGSSKQVDPRQIASTKQTRTFNAFEALEGNDDEDDDE</sequence>
<reference key="1">
    <citation type="journal article" date="2009" name="Nature">
        <title>Evolution of pathogenicity and sexual reproduction in eight Candida genomes.</title>
        <authorList>
            <person name="Butler G."/>
            <person name="Rasmussen M.D."/>
            <person name="Lin M.F."/>
            <person name="Santos M.A.S."/>
            <person name="Sakthikumar S."/>
            <person name="Munro C.A."/>
            <person name="Rheinbay E."/>
            <person name="Grabherr M."/>
            <person name="Forche A."/>
            <person name="Reedy J.L."/>
            <person name="Agrafioti I."/>
            <person name="Arnaud M.B."/>
            <person name="Bates S."/>
            <person name="Brown A.J.P."/>
            <person name="Brunke S."/>
            <person name="Costanzo M.C."/>
            <person name="Fitzpatrick D.A."/>
            <person name="de Groot P.W.J."/>
            <person name="Harris D."/>
            <person name="Hoyer L.L."/>
            <person name="Hube B."/>
            <person name="Klis F.M."/>
            <person name="Kodira C."/>
            <person name="Lennard N."/>
            <person name="Logue M.E."/>
            <person name="Martin R."/>
            <person name="Neiman A.M."/>
            <person name="Nikolaou E."/>
            <person name="Quail M.A."/>
            <person name="Quinn J."/>
            <person name="Santos M.C."/>
            <person name="Schmitzberger F.F."/>
            <person name="Sherlock G."/>
            <person name="Shah P."/>
            <person name="Silverstein K.A.T."/>
            <person name="Skrzypek M.S."/>
            <person name="Soll D."/>
            <person name="Staggs R."/>
            <person name="Stansfield I."/>
            <person name="Stumpf M.P.H."/>
            <person name="Sudbery P.E."/>
            <person name="Srikantha T."/>
            <person name="Zeng Q."/>
            <person name="Berman J."/>
            <person name="Berriman M."/>
            <person name="Heitman J."/>
            <person name="Gow N.A.R."/>
            <person name="Lorenz M.C."/>
            <person name="Birren B.W."/>
            <person name="Kellis M."/>
            <person name="Cuomo C.A."/>
        </authorList>
    </citation>
    <scope>NUCLEOTIDE SEQUENCE [LARGE SCALE GENOMIC DNA]</scope>
    <source>
        <strain>ATCC 11503 / BCRC 21390 / CBS 2605 / JCM 1781 / NBRC 1676 / NRRL YB-4239</strain>
    </source>
</reference>
<feature type="chain" id="PRO_0000330088" description="Cap-associated protein CAF20">
    <location>
        <begin position="1"/>
        <end position="219"/>
    </location>
</feature>
<feature type="region of interest" description="Disordered" evidence="2">
    <location>
        <begin position="37"/>
        <end position="219"/>
    </location>
</feature>
<feature type="compositionally biased region" description="Low complexity" evidence="2">
    <location>
        <begin position="41"/>
        <end position="54"/>
    </location>
</feature>
<feature type="compositionally biased region" description="Basic and acidic residues" evidence="2">
    <location>
        <begin position="78"/>
        <end position="87"/>
    </location>
</feature>
<feature type="compositionally biased region" description="Basic and acidic residues" evidence="2">
    <location>
        <begin position="100"/>
        <end position="114"/>
    </location>
</feature>
<feature type="compositionally biased region" description="Gly residues" evidence="2">
    <location>
        <begin position="154"/>
        <end position="172"/>
    </location>
</feature>
<feature type="compositionally biased region" description="Polar residues" evidence="2">
    <location>
        <begin position="179"/>
        <end position="203"/>
    </location>
</feature>
<feature type="compositionally biased region" description="Acidic residues" evidence="2">
    <location>
        <begin position="210"/>
        <end position="219"/>
    </location>
</feature>
<evidence type="ECO:0000250" key="1"/>
<evidence type="ECO:0000256" key="2">
    <source>
        <dbReference type="SAM" id="MobiDB-lite"/>
    </source>
</evidence>
<evidence type="ECO:0000305" key="3"/>
<accession>A5DTJ3</accession>
<protein>
    <recommendedName>
        <fullName>Cap-associated protein CAF20</fullName>
    </recommendedName>
</protein>
<proteinExistence type="inferred from homology"/>
<name>CAF20_LODEL</name>
<organism>
    <name type="scientific">Lodderomyces elongisporus (strain ATCC 11503 / CBS 2605 / JCM 1781 / NBRC 1676 / NRRL YB-4239)</name>
    <name type="common">Yeast</name>
    <name type="synonym">Saccharomyces elongisporus</name>
    <dbReference type="NCBI Taxonomy" id="379508"/>
    <lineage>
        <taxon>Eukaryota</taxon>
        <taxon>Fungi</taxon>
        <taxon>Dikarya</taxon>
        <taxon>Ascomycota</taxon>
        <taxon>Saccharomycotina</taxon>
        <taxon>Pichiomycetes</taxon>
        <taxon>Debaryomycetaceae</taxon>
        <taxon>Candida/Lodderomyces clade</taxon>
        <taxon>Lodderomyces</taxon>
    </lineage>
</organism>